<name>GSDM_GILLR</name>
<organism>
    <name type="scientific">Gillisia limnaea (strain DSM 15749 / LMG 21470 / R-8282)</name>
    <dbReference type="NCBI Taxonomy" id="865937"/>
    <lineage>
        <taxon>Bacteria</taxon>
        <taxon>Pseudomonadati</taxon>
        <taxon>Bacteroidota</taxon>
        <taxon>Flavobacteriia</taxon>
        <taxon>Flavobacteriales</taxon>
        <taxon>Flavobacteriaceae</taxon>
        <taxon>Gillisia</taxon>
    </lineage>
</organism>
<sequence length="266" mass="29769">MSKVLKNALAGYGYNLVALPKEGIAPLLLLYKNKRDVSSSGNNIDKLFALADSPPPIVSKNNATLNLQQNSTVSFDGKAGVDILDWLLQKLKMGKLRGNINADHINSLQISYQNVFEDNVSLLQLDNFISGSEPKVDQFNTFKEKLKDNELFVINSVLKSNSFSVSAQNKNGQNIDLEATIKGIVDADVNVGRSKKDEVLMEYKNATPIVFAFKAQKIIYDHKKWWQFFKKGDAKFRIKDEHGVVLKDESGFPTQSLEETNELINI</sequence>
<protein>
    <recommendedName>
        <fullName evidence="7">Gasdermin bGSDM</fullName>
        <shortName evidence="6">bGSDM</shortName>
    </recommendedName>
    <alternativeName>
        <fullName evidence="6">Bacterial gasdermin</fullName>
    </alternativeName>
    <component>
        <recommendedName>
            <fullName evidence="7">Gasdermin bGSDM, N-terminus</fullName>
        </recommendedName>
    </component>
</protein>
<keyword id="KW-0051">Antiviral defense</keyword>
<keyword id="KW-0997">Cell inner membrane</keyword>
<keyword id="KW-1003">Cell membrane</keyword>
<keyword id="KW-0963">Cytoplasm</keyword>
<keyword id="KW-0472">Membrane</keyword>
<keyword id="KW-1185">Reference proteome</keyword>
<keyword id="KW-0812">Transmembrane</keyword>
<keyword id="KW-1134">Transmembrane beta strand</keyword>
<gene>
    <name evidence="5" type="ORF">Gilli_2518</name>
</gene>
<accession>H2BXL6</accession>
<feature type="chain" id="PRO_0000455568" description="Gasdermin bGSDM">
    <location>
        <begin position="1"/>
        <end position="266"/>
    </location>
</feature>
<feature type="chain" id="PRO_0000455569" description="Gasdermin bGSDM, N-terminus">
    <location>
        <begin position="1"/>
        <end status="unknown"/>
    </location>
</feature>
<feature type="transmembrane region" description="Beta stranded" evidence="2">
    <location>
        <begin position="67"/>
        <end position="83"/>
    </location>
</feature>
<feature type="transmembrane region" description="Beta stranded" evidence="2">
    <location>
        <begin position="95"/>
        <end position="113"/>
    </location>
</feature>
<feature type="transmembrane region" description="Beta stranded" evidence="2">
    <location>
        <begin position="162"/>
        <end position="179"/>
    </location>
</feature>
<feature type="transmembrane region" description="Beta stranded" evidence="2">
    <location>
        <begin position="187"/>
        <end position="203"/>
    </location>
</feature>
<feature type="region of interest" description="C-terminal region" evidence="7">
    <location>
        <begin status="unknown"/>
        <end position="266"/>
    </location>
</feature>
<feature type="mutagenesis site" description="Not cleaved by Runella protease." evidence="4">
    <original>FFKKGDAK</original>
    <variation>NRVLGENM</variation>
    <location>
        <begin position="228"/>
        <end position="235"/>
    </location>
</feature>
<comment type="function">
    <molecule>Gasdermin bGSDM</molecule>
    <text evidence="1 3 4">Precursor of a pore-forming protein involved in defense against bacteriophages (By similarity). Expression of bGSDM and the neighboring protease gene (Gilli_2517) is not toxic in E.coli (PubMed:35025633). Cleavage of this precursor by its dedicated protease releases the active moiety (gasdermin bGSDM, N-terminus) which inserts into membranes, forming pores and triggering cell death (By similarity).</text>
</comment>
<comment type="function">
    <molecule>Gasdermin bGSDM, N-terminus</molecule>
    <text evidence="3">Pore-forming protein that causes membrane permeabilization via a pyroptosis-like activity. Makes ring-like pores when released.</text>
</comment>
<comment type="activity regulation">
    <molecule>Gasdermin bGSDM</molecule>
    <text evidence="3">The full-length protein before cleavage is inactive: intramolecular interactions between the N-terminal domain and the C-terminal region mediate autoinhibition. The pyroptosis-like-inducing activity is carried by the released N-terminal domain (Gasdermin bGSDM, N-terminus).</text>
</comment>
<comment type="subunit">
    <molecule>Gasdermin bGSDM</molecule>
    <text evidence="3">Monomer.</text>
</comment>
<comment type="subunit">
    <molecule>Gasdermin bGSDM, N-terminus</molecule>
    <text evidence="2">Forms large, homooligomeric ring-shaped pores when inserted in membranes.</text>
</comment>
<comment type="subcellular location">
    <molecule>Gasdermin bGSDM</molecule>
    <subcellularLocation>
        <location evidence="3">Cytoplasm</location>
    </subcellularLocation>
</comment>
<comment type="subcellular location">
    <molecule>Gasdermin bGSDM, N-terminus</molecule>
    <subcellularLocation>
        <location evidence="3">Cell inner membrane</location>
        <topology evidence="7">Multi-pass membrane protein</topology>
    </subcellularLocation>
</comment>
<comment type="domain">
    <text evidence="3">The N-terminus has marked structural similarity to the mammalian gasdermin N-terminal domain. The C-terminal region wraps around the twisted beta sheet core, probably stabilizing the inactive state.</text>
</comment>
<comment type="mass spectrometry" mass="29724.43" method="Electrospray" evidence="4">
    <text>Full-length, unmodified protein expressed in E.coli.</text>
</comment>
<comment type="similarity">
    <text evidence="4">Belongs to the bacterial gasdermin family.</text>
</comment>
<evidence type="ECO:0000250" key="1">
    <source>
        <dbReference type="UniProtKB" id="A0A0S2DNG5"/>
    </source>
</evidence>
<evidence type="ECO:0000250" key="2">
    <source>
        <dbReference type="UniProtKB" id="A0A2T4VDM4"/>
    </source>
</evidence>
<evidence type="ECO:0000250" key="3">
    <source>
        <dbReference type="UniProtKB" id="P0DV48"/>
    </source>
</evidence>
<evidence type="ECO:0000269" key="4">
    <source>
    </source>
</evidence>
<evidence type="ECO:0000303" key="5">
    <source>
    </source>
</evidence>
<evidence type="ECO:0000303" key="6">
    <source>
    </source>
</evidence>
<evidence type="ECO:0000305" key="7"/>
<proteinExistence type="evidence at protein level"/>
<dbReference type="EMBL" id="JH594606">
    <property type="protein sequence ID" value="EHQ03140.1"/>
    <property type="molecule type" value="Genomic_DNA"/>
</dbReference>
<dbReference type="RefSeq" id="WP_006989447.1">
    <property type="nucleotide sequence ID" value="NZ_JH594606.1"/>
</dbReference>
<dbReference type="SMR" id="H2BXL6"/>
<dbReference type="STRING" id="865937.Gilli_2518"/>
<dbReference type="eggNOG" id="ENOG5033MVA">
    <property type="taxonomic scope" value="Bacteria"/>
</dbReference>
<dbReference type="HOGENOM" id="CLU_1044940_0_0_10"/>
<dbReference type="OrthoDB" id="583589at2"/>
<dbReference type="Proteomes" id="UP000003844">
    <property type="component" value="Unassembled WGS sequence"/>
</dbReference>
<dbReference type="GO" id="GO:0005737">
    <property type="term" value="C:cytoplasm"/>
    <property type="evidence" value="ECO:0007669"/>
    <property type="project" value="UniProtKB-SubCell"/>
</dbReference>
<dbReference type="GO" id="GO:0005886">
    <property type="term" value="C:plasma membrane"/>
    <property type="evidence" value="ECO:0007669"/>
    <property type="project" value="UniProtKB-SubCell"/>
</dbReference>
<dbReference type="GO" id="GO:0051607">
    <property type="term" value="P:defense response to virus"/>
    <property type="evidence" value="ECO:0007669"/>
    <property type="project" value="UniProtKB-KW"/>
</dbReference>
<reference key="1">
    <citation type="journal article" date="2012" name="Stand. Genomic Sci.">
        <title>Genome sequence of the Antarctic rhodopsins-containing flavobacterium Gillisia limnaea type strain (R-8282(T)).</title>
        <authorList>
            <person name="Riedel T."/>
            <person name="Held B."/>
            <person name="Nolan M."/>
            <person name="Lucas S."/>
            <person name="Lapidus A."/>
            <person name="Tice H."/>
            <person name="Del Rio T.G."/>
            <person name="Cheng J.F."/>
            <person name="Han C."/>
            <person name="Tapia R."/>
            <person name="Goodwin L.A."/>
            <person name="Pitluck S."/>
            <person name="Liolios K."/>
            <person name="Mavromatis K."/>
            <person name="Pagani I."/>
            <person name="Ivanova N."/>
            <person name="Mikhailova N."/>
            <person name="Pati A."/>
            <person name="Chen A."/>
            <person name="Palaniappan K."/>
            <person name="Land M."/>
            <person name="Rohde M."/>
            <person name="Tindall B.J."/>
            <person name="Detter J.C."/>
            <person name="Goker M."/>
            <person name="Bristow J."/>
            <person name="Eisen J.A."/>
            <person name="Markowitz V."/>
            <person name="Hugenholtz P."/>
            <person name="Kyrpides N.C."/>
            <person name="Klenk H.P."/>
            <person name="Woyke T."/>
        </authorList>
    </citation>
    <scope>NUCLEOTIDE SEQUENCE [LARGE SCALE GENOMIC DNA]</scope>
    <source>
        <strain>DSM 15749 / LMG 21470 / R-8282</strain>
    </source>
</reference>
<reference key="2">
    <citation type="journal article" date="2022" name="Science">
        <title>Bacterial gasdermins reveal an ancient mechanism of cell death.</title>
        <authorList>
            <person name="Johnson A.G."/>
            <person name="Wein T."/>
            <person name="Mayer M.L."/>
            <person name="Duncan-Lowey B."/>
            <person name="Yirmiya E."/>
            <person name="Oppenheimer-Shaanan Y."/>
            <person name="Amitai G."/>
            <person name="Sorek R."/>
            <person name="Kranzusch P.J."/>
        </authorList>
    </citation>
    <scope>FUNCTION</scope>
    <scope>MASS SPECTROMETRY</scope>
    <scope>MUTAGENESIS OF 228-PHE--LYS-235</scope>
    <source>
        <strain>DSM 15749 / LMG 21470 / R-8282</strain>
    </source>
</reference>